<evidence type="ECO:0000255" key="1">
    <source>
        <dbReference type="HAMAP-Rule" id="MF_01845"/>
    </source>
</evidence>
<reference key="1">
    <citation type="journal article" date="2005" name="Nucleic Acids Res.">
        <title>Genome dynamics and diversity of Shigella species, the etiologic agents of bacillary dysentery.</title>
        <authorList>
            <person name="Yang F."/>
            <person name="Yang J."/>
            <person name="Zhang X."/>
            <person name="Chen L."/>
            <person name="Jiang Y."/>
            <person name="Yan Y."/>
            <person name="Tang X."/>
            <person name="Wang J."/>
            <person name="Xiong Z."/>
            <person name="Dong J."/>
            <person name="Xue Y."/>
            <person name="Zhu Y."/>
            <person name="Xu X."/>
            <person name="Sun L."/>
            <person name="Chen S."/>
            <person name="Nie H."/>
            <person name="Peng J."/>
            <person name="Xu J."/>
            <person name="Wang Y."/>
            <person name="Yuan Z."/>
            <person name="Wen Y."/>
            <person name="Yao Z."/>
            <person name="Shen Y."/>
            <person name="Qiang B."/>
            <person name="Hou Y."/>
            <person name="Yu J."/>
            <person name="Jin Q."/>
        </authorList>
    </citation>
    <scope>NUCLEOTIDE SEQUENCE [LARGE SCALE GENOMIC DNA]</scope>
    <source>
        <strain>Sd197</strain>
    </source>
</reference>
<dbReference type="EMBL" id="CP000034">
    <property type="protein sequence ID" value="ABB63297.1"/>
    <property type="molecule type" value="Genomic_DNA"/>
</dbReference>
<dbReference type="RefSeq" id="WP_000460540.1">
    <property type="nucleotide sequence ID" value="NC_007606.1"/>
</dbReference>
<dbReference type="RefSeq" id="YP_404788.1">
    <property type="nucleotide sequence ID" value="NC_007606.1"/>
</dbReference>
<dbReference type="SMR" id="Q32BK8"/>
<dbReference type="STRING" id="300267.SDY_3300"/>
<dbReference type="EnsemblBacteria" id="ABB63297">
    <property type="protein sequence ID" value="ABB63297"/>
    <property type="gene ID" value="SDY_3300"/>
</dbReference>
<dbReference type="KEGG" id="sdy:SDY_3300"/>
<dbReference type="PATRIC" id="fig|300267.13.peg.3945"/>
<dbReference type="HOGENOM" id="CLU_051840_0_0_6"/>
<dbReference type="Proteomes" id="UP000002716">
    <property type="component" value="Chromosome"/>
</dbReference>
<dbReference type="GO" id="GO:0080146">
    <property type="term" value="F:L-cysteine desulfhydrase activity"/>
    <property type="evidence" value="ECO:0007669"/>
    <property type="project" value="TreeGrafter"/>
</dbReference>
<dbReference type="GO" id="GO:0019450">
    <property type="term" value="P:L-cysteine catabolic process to pyruvate"/>
    <property type="evidence" value="ECO:0007669"/>
    <property type="project" value="TreeGrafter"/>
</dbReference>
<dbReference type="HAMAP" id="MF_01845">
    <property type="entry name" value="UPF0597"/>
    <property type="match status" value="1"/>
</dbReference>
<dbReference type="InterPro" id="IPR005130">
    <property type="entry name" value="Ser_deHydtase-like_asu"/>
</dbReference>
<dbReference type="InterPro" id="IPR021144">
    <property type="entry name" value="UPF0597"/>
</dbReference>
<dbReference type="PANTHER" id="PTHR30501">
    <property type="entry name" value="UPF0597 PROTEIN YHAM"/>
    <property type="match status" value="1"/>
</dbReference>
<dbReference type="PANTHER" id="PTHR30501:SF2">
    <property type="entry name" value="UPF0597 PROTEIN YHAM"/>
    <property type="match status" value="1"/>
</dbReference>
<dbReference type="Pfam" id="PF03313">
    <property type="entry name" value="SDH_alpha"/>
    <property type="match status" value="1"/>
</dbReference>
<dbReference type="PIRSF" id="PIRSF006054">
    <property type="entry name" value="UCP006054"/>
    <property type="match status" value="1"/>
</dbReference>
<gene>
    <name evidence="1" type="primary">yhaM</name>
    <name type="ordered locus">SDY_3300</name>
</gene>
<keyword id="KW-1185">Reference proteome</keyword>
<protein>
    <recommendedName>
        <fullName evidence="1">UPF0597 protein YhaM</fullName>
    </recommendedName>
</protein>
<sequence>MFDSTLNPLWQRYILAVQEEVKPALGCTEPISLALAASVAAAELEGPVERVEAWVSPNLMKNGLGVTVPGTGMVGLPIAAALGALGGNANAGLEVLKDATAQAIADAKALLAAGKVSVKIQEPCNEILFSRAKVWNGEKWACVTIVGGHTNIVHIETHDGVVFTQQACVAEGEQESPLSVLSRTTLAEILKFVNEVQFAAIRFILDSAKLNCALSQEGLSGNWGLHIGATLEKQCERGLLAKDLSSSIVIRTSAASDARMGGATLPAMSNSGSGNQGITATMPVVVVAEHFGADDERLARALMLLHLSAIYIHNQLPRLSALCAATTAAMGAAAGMAWLVDGRYETISMAISSMIGDVSGMICDGASNSCAMKVSTSASAAWKAVLMALDDTAVTGNEGIVAHDVEQSIANLCALASHSMQQTDRQIIEIMASKAR</sequence>
<name>YHAM_SHIDS</name>
<accession>Q32BK8</accession>
<feature type="chain" id="PRO_0000339858" description="UPF0597 protein YhaM">
    <location>
        <begin position="1"/>
        <end position="436"/>
    </location>
</feature>
<comment type="similarity">
    <text evidence="1">Belongs to the UPF0597 family.</text>
</comment>
<proteinExistence type="inferred from homology"/>
<organism>
    <name type="scientific">Shigella dysenteriae serotype 1 (strain Sd197)</name>
    <dbReference type="NCBI Taxonomy" id="300267"/>
    <lineage>
        <taxon>Bacteria</taxon>
        <taxon>Pseudomonadati</taxon>
        <taxon>Pseudomonadota</taxon>
        <taxon>Gammaproteobacteria</taxon>
        <taxon>Enterobacterales</taxon>
        <taxon>Enterobacteriaceae</taxon>
        <taxon>Shigella</taxon>
    </lineage>
</organism>